<dbReference type="EC" id="2.7.11.1" evidence="2"/>
<dbReference type="EMBL" id="AABL01001986">
    <property type="protein sequence ID" value="EAA18147.1"/>
    <property type="molecule type" value="Genomic_DNA"/>
</dbReference>
<dbReference type="SMR" id="Q7RBX5"/>
<dbReference type="STRING" id="73239.Q7RBX5"/>
<dbReference type="PaxDb" id="73239-Q7RBX5"/>
<dbReference type="EnsemblProtists" id="EAA18147">
    <property type="protein sequence ID" value="EAA18147"/>
    <property type="gene ID" value="EAA18147"/>
</dbReference>
<dbReference type="KEGG" id="pyo:PY17X_0913600"/>
<dbReference type="InParanoid" id="Q7RBX5"/>
<dbReference type="Proteomes" id="UP000008553">
    <property type="component" value="Unassembled WGS sequence"/>
</dbReference>
<dbReference type="GO" id="GO:0031410">
    <property type="term" value="C:cytoplasmic vesicle"/>
    <property type="evidence" value="ECO:0007669"/>
    <property type="project" value="UniProtKB-KW"/>
</dbReference>
<dbReference type="GO" id="GO:0005576">
    <property type="term" value="C:extracellular region"/>
    <property type="evidence" value="ECO:0007669"/>
    <property type="project" value="UniProtKB-SubCell"/>
</dbReference>
<dbReference type="GO" id="GO:0044228">
    <property type="term" value="C:host cell surface"/>
    <property type="evidence" value="ECO:0007669"/>
    <property type="project" value="UniProtKB-SubCell"/>
</dbReference>
<dbReference type="GO" id="GO:0020009">
    <property type="term" value="C:microneme"/>
    <property type="evidence" value="ECO:0007669"/>
    <property type="project" value="UniProtKB-SubCell"/>
</dbReference>
<dbReference type="GO" id="GO:0005524">
    <property type="term" value="F:ATP binding"/>
    <property type="evidence" value="ECO:0007669"/>
    <property type="project" value="UniProtKB-KW"/>
</dbReference>
<dbReference type="GO" id="GO:0046872">
    <property type="term" value="F:metal ion binding"/>
    <property type="evidence" value="ECO:0007669"/>
    <property type="project" value="UniProtKB-KW"/>
</dbReference>
<dbReference type="GO" id="GO:0106310">
    <property type="term" value="F:protein serine kinase activity"/>
    <property type="evidence" value="ECO:0007669"/>
    <property type="project" value="RHEA"/>
</dbReference>
<dbReference type="GO" id="GO:0004674">
    <property type="term" value="F:protein serine/threonine kinase activity"/>
    <property type="evidence" value="ECO:0007669"/>
    <property type="project" value="UniProtKB-KW"/>
</dbReference>
<dbReference type="CDD" id="cd14125">
    <property type="entry name" value="STKc_CK1_delta_epsilon"/>
    <property type="match status" value="1"/>
</dbReference>
<dbReference type="FunFam" id="1.10.510.10:FF:000538">
    <property type="entry name" value="Casein kinase 1"/>
    <property type="match status" value="1"/>
</dbReference>
<dbReference type="Gene3D" id="1.10.510.10">
    <property type="entry name" value="Transferase(Phosphotransferase) domain 1"/>
    <property type="match status" value="1"/>
</dbReference>
<dbReference type="InterPro" id="IPR050235">
    <property type="entry name" value="CK1_Ser-Thr_kinase"/>
</dbReference>
<dbReference type="InterPro" id="IPR011009">
    <property type="entry name" value="Kinase-like_dom_sf"/>
</dbReference>
<dbReference type="InterPro" id="IPR000719">
    <property type="entry name" value="Prot_kinase_dom"/>
</dbReference>
<dbReference type="InterPro" id="IPR017441">
    <property type="entry name" value="Protein_kinase_ATP_BS"/>
</dbReference>
<dbReference type="InterPro" id="IPR008271">
    <property type="entry name" value="Ser/Thr_kinase_AS"/>
</dbReference>
<dbReference type="PANTHER" id="PTHR11909">
    <property type="entry name" value="CASEIN KINASE-RELATED"/>
    <property type="match status" value="1"/>
</dbReference>
<dbReference type="Pfam" id="PF00069">
    <property type="entry name" value="Pkinase"/>
    <property type="match status" value="1"/>
</dbReference>
<dbReference type="SMART" id="SM00220">
    <property type="entry name" value="S_TKc"/>
    <property type="match status" value="1"/>
</dbReference>
<dbReference type="SUPFAM" id="SSF56112">
    <property type="entry name" value="Protein kinase-like (PK-like)"/>
    <property type="match status" value="1"/>
</dbReference>
<dbReference type="PROSITE" id="PS00107">
    <property type="entry name" value="PROTEIN_KINASE_ATP"/>
    <property type="match status" value="1"/>
</dbReference>
<dbReference type="PROSITE" id="PS50011">
    <property type="entry name" value="PROTEIN_KINASE_DOM"/>
    <property type="match status" value="1"/>
</dbReference>
<dbReference type="PROSITE" id="PS00108">
    <property type="entry name" value="PROTEIN_KINASE_ST"/>
    <property type="match status" value="1"/>
</dbReference>
<feature type="chain" id="PRO_0000192853" description="Casein kinase I">
    <location>
        <begin position="1"/>
        <end position="323"/>
    </location>
</feature>
<feature type="domain" description="Protein kinase" evidence="3">
    <location>
        <begin position="9"/>
        <end position="278"/>
    </location>
</feature>
<feature type="active site" description="Proton acceptor" evidence="3 4">
    <location>
        <position position="128"/>
    </location>
</feature>
<feature type="binding site" evidence="3">
    <location>
        <begin position="15"/>
        <end position="23"/>
    </location>
    <ligand>
        <name>ATP</name>
        <dbReference type="ChEBI" id="CHEBI:30616"/>
    </ligand>
</feature>
<feature type="binding site" evidence="3">
    <location>
        <position position="38"/>
    </location>
    <ligand>
        <name>ATP</name>
        <dbReference type="ChEBI" id="CHEBI:30616"/>
    </ligand>
</feature>
<keyword id="KW-0067">ATP-binding</keyword>
<keyword id="KW-0963">Cytoplasm</keyword>
<keyword id="KW-0968">Cytoplasmic vesicle</keyword>
<keyword id="KW-0418">Kinase</keyword>
<keyword id="KW-0460">Magnesium</keyword>
<keyword id="KW-0479">Metal-binding</keyword>
<keyword id="KW-0547">Nucleotide-binding</keyword>
<keyword id="KW-1185">Reference proteome</keyword>
<keyword id="KW-0964">Secreted</keyword>
<keyword id="KW-0723">Serine/threonine-protein kinase</keyword>
<keyword id="KW-0808">Transferase</keyword>
<protein>
    <recommendedName>
        <fullName evidence="5">Casein kinase I</fullName>
        <ecNumber evidence="2">2.7.11.1</ecNumber>
    </recommendedName>
</protein>
<proteinExistence type="inferred from homology"/>
<name>KC1_PLAYO</name>
<gene>
    <name type="primary">CK1</name>
    <name type="ORF">PY06011</name>
</gene>
<sequence>MEIRVANKYALGKKLGSGSFGDIYVAKDIVTMEEFAVKLESTRSKHPQLLYESKLYKILGGGIGVPKVYWYGIEGDFTIMVLDLLGPSLEDLFTLCNRKFSLKTVLMTADQMLNRIEYVHSKNFIHRDIKPDNFLIGRGKKVTLIHIIDFGLAKKYRDSRSHTHIPYKEGKNLTGTARYASINTHLGIEQSRRDDIEALGYVLMYFLRGSLPWQGLKAISKKDKYDKIMEKKISTSVEVLCRNTSFEFVTYLNYCRSLRFEDRPDYTYLRRLLKDLFIREGFTYDFLFDWTCVYASEKDKKKMLENKNRFDQIADQEGRVKQN</sequence>
<organism>
    <name type="scientific">Plasmodium yoelii yoelii</name>
    <dbReference type="NCBI Taxonomy" id="73239"/>
    <lineage>
        <taxon>Eukaryota</taxon>
        <taxon>Sar</taxon>
        <taxon>Alveolata</taxon>
        <taxon>Apicomplexa</taxon>
        <taxon>Aconoidasida</taxon>
        <taxon>Haemosporida</taxon>
        <taxon>Plasmodiidae</taxon>
        <taxon>Plasmodium</taxon>
        <taxon>Plasmodium (Vinckeia)</taxon>
    </lineage>
</organism>
<reference key="1">
    <citation type="journal article" date="2002" name="Nature">
        <title>Genome sequence and comparative analysis of the model rodent malaria parasite Plasmodium yoelii yoelii.</title>
        <authorList>
            <person name="Carlton J.M."/>
            <person name="Angiuoli S.V."/>
            <person name="Suh B.B."/>
            <person name="Kooij T.W."/>
            <person name="Pertea M."/>
            <person name="Silva J.C."/>
            <person name="Ermolaeva M.D."/>
            <person name="Allen J.E."/>
            <person name="Selengut J.D."/>
            <person name="Koo H.L."/>
            <person name="Peterson J.D."/>
            <person name="Pop M."/>
            <person name="Kosack D.S."/>
            <person name="Shumway M.F."/>
            <person name="Bidwell S.L."/>
            <person name="Shallom S.J."/>
            <person name="van Aken S.E."/>
            <person name="Riedmuller S.B."/>
            <person name="Feldblyum T.V."/>
            <person name="Cho J.K."/>
            <person name="Quackenbush J."/>
            <person name="Sedegah M."/>
            <person name="Shoaibi A."/>
            <person name="Cummings L.M."/>
            <person name="Florens L."/>
            <person name="Yates J.R. III"/>
            <person name="Raine J.D."/>
            <person name="Sinden R.E."/>
            <person name="Harris M.A."/>
            <person name="Cunningham D.A."/>
            <person name="Preiser P.R."/>
            <person name="Bergman L.W."/>
            <person name="Vaidya A.B."/>
            <person name="van Lin L.H."/>
            <person name="Janse C.J."/>
            <person name="Waters A.P."/>
            <person name="Smith H.O."/>
            <person name="White O.R."/>
            <person name="Salzberg S.L."/>
            <person name="Venter J.C."/>
            <person name="Fraser C.M."/>
            <person name="Hoffman S.L."/>
            <person name="Gardner M.J."/>
            <person name="Carucci D.J."/>
        </authorList>
    </citation>
    <scope>NUCLEOTIDE SEQUENCE [LARGE SCALE GENOMIC DNA]</scope>
    <source>
        <strain>17XNL</strain>
    </source>
</reference>
<comment type="function">
    <text evidence="2">Serine/threonine-protein kinase likely to be involved in many cellular processes.</text>
</comment>
<comment type="catalytic activity">
    <reaction evidence="2">
        <text>L-seryl-[protein] + ATP = O-phospho-L-seryl-[protein] + ADP + H(+)</text>
        <dbReference type="Rhea" id="RHEA:17989"/>
        <dbReference type="Rhea" id="RHEA-COMP:9863"/>
        <dbReference type="Rhea" id="RHEA-COMP:11604"/>
        <dbReference type="ChEBI" id="CHEBI:15378"/>
        <dbReference type="ChEBI" id="CHEBI:29999"/>
        <dbReference type="ChEBI" id="CHEBI:30616"/>
        <dbReference type="ChEBI" id="CHEBI:83421"/>
        <dbReference type="ChEBI" id="CHEBI:456216"/>
        <dbReference type="EC" id="2.7.11.1"/>
    </reaction>
</comment>
<comment type="catalytic activity">
    <reaction evidence="2">
        <text>L-threonyl-[protein] + ATP = O-phospho-L-threonyl-[protein] + ADP + H(+)</text>
        <dbReference type="Rhea" id="RHEA:46608"/>
        <dbReference type="Rhea" id="RHEA-COMP:11060"/>
        <dbReference type="Rhea" id="RHEA-COMP:11605"/>
        <dbReference type="ChEBI" id="CHEBI:15378"/>
        <dbReference type="ChEBI" id="CHEBI:30013"/>
        <dbReference type="ChEBI" id="CHEBI:30616"/>
        <dbReference type="ChEBI" id="CHEBI:61977"/>
        <dbReference type="ChEBI" id="CHEBI:456216"/>
        <dbReference type="EC" id="2.7.11.1"/>
    </reaction>
</comment>
<comment type="cofactor">
    <cofactor evidence="1">
        <name>Mg(2+)</name>
        <dbReference type="ChEBI" id="CHEBI:18420"/>
    </cofactor>
</comment>
<comment type="subcellular location">
    <subcellularLocation>
        <location evidence="2">Cytoplasm</location>
    </subcellularLocation>
    <subcellularLocation>
        <location evidence="2">Cytoplasmic vesicle</location>
        <location evidence="2">Secretory vesicle</location>
        <location evidence="2">Microneme</location>
    </subcellularLocation>
    <subcellularLocation>
        <location evidence="2">Secreted</location>
    </subcellularLocation>
    <subcellularLocation>
        <location evidence="2">Host cell surface</location>
    </subcellularLocation>
</comment>
<comment type="similarity">
    <text evidence="5">Belongs to the protein kinase superfamily. CK1 Ser/Thr protein kinase family. Casein kinase I subfamily.</text>
</comment>
<evidence type="ECO:0000250" key="1">
    <source>
        <dbReference type="UniProtKB" id="O15726"/>
    </source>
</evidence>
<evidence type="ECO:0000250" key="2">
    <source>
        <dbReference type="UniProtKB" id="Q8IHZ9"/>
    </source>
</evidence>
<evidence type="ECO:0000255" key="3">
    <source>
        <dbReference type="PROSITE-ProRule" id="PRU00159"/>
    </source>
</evidence>
<evidence type="ECO:0000255" key="4">
    <source>
        <dbReference type="PROSITE-ProRule" id="PRU10027"/>
    </source>
</evidence>
<evidence type="ECO:0000305" key="5"/>
<accession>Q7RBX5</accession>